<organism>
    <name type="scientific">Rattus norvegicus</name>
    <name type="common">Rat</name>
    <dbReference type="NCBI Taxonomy" id="10116"/>
    <lineage>
        <taxon>Eukaryota</taxon>
        <taxon>Metazoa</taxon>
        <taxon>Chordata</taxon>
        <taxon>Craniata</taxon>
        <taxon>Vertebrata</taxon>
        <taxon>Euteleostomi</taxon>
        <taxon>Mammalia</taxon>
        <taxon>Eutheria</taxon>
        <taxon>Euarchontoglires</taxon>
        <taxon>Glires</taxon>
        <taxon>Rodentia</taxon>
        <taxon>Myomorpha</taxon>
        <taxon>Muroidea</taxon>
        <taxon>Muridae</taxon>
        <taxon>Murinae</taxon>
        <taxon>Rattus</taxon>
    </lineage>
</organism>
<protein>
    <recommendedName>
        <fullName evidence="6">Zinc finger protein 418</fullName>
    </recommendedName>
</protein>
<dbReference type="SMR" id="D3ZVT0"/>
<dbReference type="STRING" id="10116.ENSRNOP00000020751"/>
<dbReference type="PhosphoSitePlus" id="D3ZVT0"/>
<dbReference type="Ensembl" id="ENSRNOT00000020751.8">
    <property type="protein sequence ID" value="ENSRNOP00000020751.8"/>
    <property type="gene ID" value="ENSRNOG00000015271.8"/>
</dbReference>
<dbReference type="UCSC" id="RGD:1311663">
    <property type="organism name" value="rat"/>
</dbReference>
<dbReference type="AGR" id="RGD:1311663"/>
<dbReference type="RGD" id="1311663">
    <property type="gene designation" value="Zfp418"/>
</dbReference>
<dbReference type="GeneTree" id="ENSGT00940000163877"/>
<dbReference type="HOGENOM" id="CLU_002678_0_12_1"/>
<dbReference type="InParanoid" id="D3ZVT0"/>
<dbReference type="OMA" id="FVKSCIF"/>
<dbReference type="OrthoDB" id="427030at2759"/>
<dbReference type="TreeFam" id="TF339848"/>
<dbReference type="PRO" id="PR:D3ZVT0"/>
<dbReference type="Proteomes" id="UP000002494">
    <property type="component" value="Chromosome 1"/>
</dbReference>
<dbReference type="Bgee" id="ENSRNOG00000015271">
    <property type="expression patterns" value="Expressed in cerebellum and 19 other cell types or tissues"/>
</dbReference>
<dbReference type="ExpressionAtlas" id="D3ZVT0">
    <property type="expression patterns" value="baseline and differential"/>
</dbReference>
<dbReference type="GO" id="GO:0005634">
    <property type="term" value="C:nucleus"/>
    <property type="evidence" value="ECO:0000314"/>
    <property type="project" value="UniProtKB"/>
</dbReference>
<dbReference type="GO" id="GO:0000981">
    <property type="term" value="F:DNA-binding transcription factor activity, RNA polymerase II-specific"/>
    <property type="evidence" value="ECO:0000318"/>
    <property type="project" value="GO_Central"/>
</dbReference>
<dbReference type="GO" id="GO:0001217">
    <property type="term" value="F:DNA-binding transcription repressor activity"/>
    <property type="evidence" value="ECO:0000250"/>
    <property type="project" value="UniProtKB"/>
</dbReference>
<dbReference type="GO" id="GO:0000978">
    <property type="term" value="F:RNA polymerase II cis-regulatory region sequence-specific DNA binding"/>
    <property type="evidence" value="ECO:0000318"/>
    <property type="project" value="GO_Central"/>
</dbReference>
<dbReference type="GO" id="GO:0008270">
    <property type="term" value="F:zinc ion binding"/>
    <property type="evidence" value="ECO:0007669"/>
    <property type="project" value="UniProtKB-KW"/>
</dbReference>
<dbReference type="GO" id="GO:0003300">
    <property type="term" value="P:cardiac muscle hypertrophy"/>
    <property type="evidence" value="ECO:0000266"/>
    <property type="project" value="RGD"/>
</dbReference>
<dbReference type="GO" id="GO:0016237">
    <property type="term" value="P:microautophagy"/>
    <property type="evidence" value="ECO:0000315"/>
    <property type="project" value="UniProtKB"/>
</dbReference>
<dbReference type="GO" id="GO:0061052">
    <property type="term" value="P:negative regulation of cell growth involved in cardiac muscle cell development"/>
    <property type="evidence" value="ECO:0000266"/>
    <property type="project" value="RGD"/>
</dbReference>
<dbReference type="GO" id="GO:0006355">
    <property type="term" value="P:regulation of DNA-templated transcription"/>
    <property type="evidence" value="ECO:0000318"/>
    <property type="project" value="GO_Central"/>
</dbReference>
<dbReference type="GO" id="GO:0032434">
    <property type="term" value="P:regulation of proteasomal ubiquitin-dependent protein catabolic process"/>
    <property type="evidence" value="ECO:0000315"/>
    <property type="project" value="UniProtKB"/>
</dbReference>
<dbReference type="CDD" id="cd07765">
    <property type="entry name" value="KRAB_A-box"/>
    <property type="match status" value="1"/>
</dbReference>
<dbReference type="FunFam" id="3.30.160.60:FF:000478">
    <property type="entry name" value="Zinc finger protein 133"/>
    <property type="match status" value="1"/>
</dbReference>
<dbReference type="FunFam" id="3.30.160.60:FF:000295">
    <property type="entry name" value="zinc finger protein 19"/>
    <property type="match status" value="1"/>
</dbReference>
<dbReference type="FunFam" id="3.30.160.60:FF:002343">
    <property type="entry name" value="Zinc finger protein 33A"/>
    <property type="match status" value="4"/>
</dbReference>
<dbReference type="FunFam" id="3.30.160.60:FF:000187">
    <property type="entry name" value="zinc finger protein 37 homolog"/>
    <property type="match status" value="1"/>
</dbReference>
<dbReference type="FunFam" id="3.30.160.60:FF:000342">
    <property type="entry name" value="zinc finger protein 394"/>
    <property type="match status" value="1"/>
</dbReference>
<dbReference type="FunFam" id="3.30.160.60:FF:001498">
    <property type="entry name" value="Zinc finger protein 404"/>
    <property type="match status" value="2"/>
</dbReference>
<dbReference type="FunFam" id="3.30.160.60:FF:000281">
    <property type="entry name" value="Zinc finger protein 558 isoform X1"/>
    <property type="match status" value="1"/>
</dbReference>
<dbReference type="FunFam" id="3.30.160.60:FF:001270">
    <property type="entry name" value="zinc finger protein 583 isoform X1"/>
    <property type="match status" value="1"/>
</dbReference>
<dbReference type="FunFam" id="3.30.160.60:FF:000098">
    <property type="entry name" value="Zinc finger protein 614"/>
    <property type="match status" value="1"/>
</dbReference>
<dbReference type="FunFam" id="3.30.160.60:FF:001157">
    <property type="entry name" value="Zinc finger protein 793"/>
    <property type="match status" value="1"/>
</dbReference>
<dbReference type="Gene3D" id="6.10.140.140">
    <property type="match status" value="1"/>
</dbReference>
<dbReference type="Gene3D" id="3.30.160.60">
    <property type="entry name" value="Classic Zinc Finger"/>
    <property type="match status" value="14"/>
</dbReference>
<dbReference type="InterPro" id="IPR001909">
    <property type="entry name" value="KRAB"/>
</dbReference>
<dbReference type="InterPro" id="IPR036051">
    <property type="entry name" value="KRAB_dom_sf"/>
</dbReference>
<dbReference type="InterPro" id="IPR050758">
    <property type="entry name" value="Znf_C2H2-type"/>
</dbReference>
<dbReference type="InterPro" id="IPR036236">
    <property type="entry name" value="Znf_C2H2_sf"/>
</dbReference>
<dbReference type="InterPro" id="IPR013087">
    <property type="entry name" value="Znf_C2H2_type"/>
</dbReference>
<dbReference type="PANTHER" id="PTHR23234:SF10">
    <property type="entry name" value="RIKEN CDNA 6720489N17 GENE-RELATED"/>
    <property type="match status" value="1"/>
</dbReference>
<dbReference type="PANTHER" id="PTHR23234">
    <property type="entry name" value="ZNF44 PROTEIN"/>
    <property type="match status" value="1"/>
</dbReference>
<dbReference type="Pfam" id="PF01352">
    <property type="entry name" value="KRAB"/>
    <property type="match status" value="1"/>
</dbReference>
<dbReference type="Pfam" id="PF00096">
    <property type="entry name" value="zf-C2H2"/>
    <property type="match status" value="14"/>
</dbReference>
<dbReference type="SMART" id="SM00349">
    <property type="entry name" value="KRAB"/>
    <property type="match status" value="1"/>
</dbReference>
<dbReference type="SMART" id="SM00355">
    <property type="entry name" value="ZnF_C2H2"/>
    <property type="match status" value="14"/>
</dbReference>
<dbReference type="SUPFAM" id="SSF57667">
    <property type="entry name" value="beta-beta-alpha zinc fingers"/>
    <property type="match status" value="8"/>
</dbReference>
<dbReference type="SUPFAM" id="SSF109640">
    <property type="entry name" value="KRAB domain (Kruppel-associated box)"/>
    <property type="match status" value="1"/>
</dbReference>
<dbReference type="PROSITE" id="PS50805">
    <property type="entry name" value="KRAB"/>
    <property type="match status" value="1"/>
</dbReference>
<dbReference type="PROSITE" id="PS00028">
    <property type="entry name" value="ZINC_FINGER_C2H2_1"/>
    <property type="match status" value="14"/>
</dbReference>
<dbReference type="PROSITE" id="PS50157">
    <property type="entry name" value="ZINC_FINGER_C2H2_2"/>
    <property type="match status" value="14"/>
</dbReference>
<sequence>MKAKKTVGSSGSCVRAPALSTEPMAAVKHLAQIPRCTETGMICTQGCVTIEDVTVYFSQEEWKLLDEAQRLLYLDVMLENFTLISSLVYRYEAEAEEKTCAQSLSQTEAPQVRTPKQGQLRQKPHPSDICITVLKDILHLNDLPGQKPYLTEVCTKPQDHKHHRAKNWLKRDVDSLVKSCIFHVAGNPFICSKIGEKFPAIWNLLQPKDIPNGEKQNKIKRGKAFHRDKNNSESDEYKKSSSPQHRLHEYPGVCSAKGGFESNSCEQDLNKYSPAPFRMDQTENRPYECHVCGKWFGQKATLRIHQRRHTGEKPYKCGECGKSFCQSSNLSEHCRVHSGERPFECLECGKAFGCHSSLLRHQRTHTGEWPYECSDCGRLFRQIVSLITHQRTHTTEKPYECGQCEKSFSHKATLTVHQRVHTGEKPYHCEACGKSFSQSANLIKHSKIHTGEKPYECGECGLCFRQRATLMKHQRTHTSERPYECRECGKFFKQYFYLIEHRRIHTTTEFYECEQCGKSYTQKATLIRHQRVHTGESPYKCEECGKAFEYKSRLKRHQRTHTGERPYECAKCGKFFRESYNLAEHQKIHTKAKPYHCDQCGKCFSRRADLVKHQRVHTGERPYTCGECGKTFSRTTNLVQHRRIHTGERPYECDQCGKSFSQVSTLTRHQLLHTGEKPYKCSK</sequence>
<reference key="1">
    <citation type="journal article" date="2004" name="Nature">
        <title>Genome sequence of the Brown Norway rat yields insights into mammalian evolution.</title>
        <authorList>
            <person name="Gibbs R.A."/>
            <person name="Weinstock G.M."/>
            <person name="Metzker M.L."/>
            <person name="Muzny D.M."/>
            <person name="Sodergren E.J."/>
            <person name="Scherer S."/>
            <person name="Scott G."/>
            <person name="Steffen D."/>
            <person name="Worley K.C."/>
            <person name="Burch P.E."/>
            <person name="Okwuonu G."/>
            <person name="Hines S."/>
            <person name="Lewis L."/>
            <person name="Deramo C."/>
            <person name="Delgado O."/>
            <person name="Dugan-Rocha S."/>
            <person name="Miner G."/>
            <person name="Morgan M."/>
            <person name="Hawes A."/>
            <person name="Gill R."/>
            <person name="Holt R.A."/>
            <person name="Adams M.D."/>
            <person name="Amanatides P.G."/>
            <person name="Baden-Tillson H."/>
            <person name="Barnstead M."/>
            <person name="Chin S."/>
            <person name="Evans C.A."/>
            <person name="Ferriera S."/>
            <person name="Fosler C."/>
            <person name="Glodek A."/>
            <person name="Gu Z."/>
            <person name="Jennings D."/>
            <person name="Kraft C.L."/>
            <person name="Nguyen T."/>
            <person name="Pfannkoch C.M."/>
            <person name="Sitter C."/>
            <person name="Sutton G.G."/>
            <person name="Venter J.C."/>
            <person name="Woodage T."/>
            <person name="Smith D."/>
            <person name="Lee H.-M."/>
            <person name="Gustafson E."/>
            <person name="Cahill P."/>
            <person name="Kana A."/>
            <person name="Doucette-Stamm L."/>
            <person name="Weinstock K."/>
            <person name="Fechtel K."/>
            <person name="Weiss R.B."/>
            <person name="Dunn D.M."/>
            <person name="Green E.D."/>
            <person name="Blakesley R.W."/>
            <person name="Bouffard G.G."/>
            <person name="De Jong P.J."/>
            <person name="Osoegawa K."/>
            <person name="Zhu B."/>
            <person name="Marra M."/>
            <person name="Schein J."/>
            <person name="Bosdet I."/>
            <person name="Fjell C."/>
            <person name="Jones S."/>
            <person name="Krzywinski M."/>
            <person name="Mathewson C."/>
            <person name="Siddiqui A."/>
            <person name="Wye N."/>
            <person name="McPherson J."/>
            <person name="Zhao S."/>
            <person name="Fraser C.M."/>
            <person name="Shetty J."/>
            <person name="Shatsman S."/>
            <person name="Geer K."/>
            <person name="Chen Y."/>
            <person name="Abramzon S."/>
            <person name="Nierman W.C."/>
            <person name="Havlak P.H."/>
            <person name="Chen R."/>
            <person name="Durbin K.J."/>
            <person name="Egan A."/>
            <person name="Ren Y."/>
            <person name="Song X.-Z."/>
            <person name="Li B."/>
            <person name="Liu Y."/>
            <person name="Qin X."/>
            <person name="Cawley S."/>
            <person name="Cooney A.J."/>
            <person name="D'Souza L.M."/>
            <person name="Martin K."/>
            <person name="Wu J.Q."/>
            <person name="Gonzalez-Garay M.L."/>
            <person name="Jackson A.R."/>
            <person name="Kalafus K.J."/>
            <person name="McLeod M.P."/>
            <person name="Milosavljevic A."/>
            <person name="Virk D."/>
            <person name="Volkov A."/>
            <person name="Wheeler D.A."/>
            <person name="Zhang Z."/>
            <person name="Bailey J.A."/>
            <person name="Eichler E.E."/>
            <person name="Tuzun E."/>
            <person name="Birney E."/>
            <person name="Mongin E."/>
            <person name="Ureta-Vidal A."/>
            <person name="Woodwark C."/>
            <person name="Zdobnov E."/>
            <person name="Bork P."/>
            <person name="Suyama M."/>
            <person name="Torrents D."/>
            <person name="Alexandersson M."/>
            <person name="Trask B.J."/>
            <person name="Young J.M."/>
            <person name="Huang H."/>
            <person name="Wang H."/>
            <person name="Xing H."/>
            <person name="Daniels S."/>
            <person name="Gietzen D."/>
            <person name="Schmidt J."/>
            <person name="Stevens K."/>
            <person name="Vitt U."/>
            <person name="Wingrove J."/>
            <person name="Camara F."/>
            <person name="Mar Alba M."/>
            <person name="Abril J.F."/>
            <person name="Guigo R."/>
            <person name="Smit A."/>
            <person name="Dubchak I."/>
            <person name="Rubin E.M."/>
            <person name="Couronne O."/>
            <person name="Poliakov A."/>
            <person name="Huebner N."/>
            <person name="Ganten D."/>
            <person name="Goesele C."/>
            <person name="Hummel O."/>
            <person name="Kreitler T."/>
            <person name="Lee Y.-A."/>
            <person name="Monti J."/>
            <person name="Schulz H."/>
            <person name="Zimdahl H."/>
            <person name="Himmelbauer H."/>
            <person name="Lehrach H."/>
            <person name="Jacob H.J."/>
            <person name="Bromberg S."/>
            <person name="Gullings-Handley J."/>
            <person name="Jensen-Seaman M.I."/>
            <person name="Kwitek A.E."/>
            <person name="Lazar J."/>
            <person name="Pasko D."/>
            <person name="Tonellato P.J."/>
            <person name="Twigger S."/>
            <person name="Ponting C.P."/>
            <person name="Duarte J.M."/>
            <person name="Rice S."/>
            <person name="Goodstadt L."/>
            <person name="Beatson S.A."/>
            <person name="Emes R.D."/>
            <person name="Winter E.E."/>
            <person name="Webber C."/>
            <person name="Brandt P."/>
            <person name="Nyakatura G."/>
            <person name="Adetobi M."/>
            <person name="Chiaromonte F."/>
            <person name="Elnitski L."/>
            <person name="Eswara P."/>
            <person name="Hardison R.C."/>
            <person name="Hou M."/>
            <person name="Kolbe D."/>
            <person name="Makova K."/>
            <person name="Miller W."/>
            <person name="Nekrutenko A."/>
            <person name="Riemer C."/>
            <person name="Schwartz S."/>
            <person name="Taylor J."/>
            <person name="Yang S."/>
            <person name="Zhang Y."/>
            <person name="Lindpaintner K."/>
            <person name="Andrews T.D."/>
            <person name="Caccamo M."/>
            <person name="Clamp M."/>
            <person name="Clarke L."/>
            <person name="Curwen V."/>
            <person name="Durbin R.M."/>
            <person name="Eyras E."/>
            <person name="Searle S.M."/>
            <person name="Cooper G.M."/>
            <person name="Batzoglou S."/>
            <person name="Brudno M."/>
            <person name="Sidow A."/>
            <person name="Stone E.A."/>
            <person name="Payseur B.A."/>
            <person name="Bourque G."/>
            <person name="Lopez-Otin C."/>
            <person name="Puente X.S."/>
            <person name="Chakrabarti K."/>
            <person name="Chatterji S."/>
            <person name="Dewey C."/>
            <person name="Pachter L."/>
            <person name="Bray N."/>
            <person name="Yap V.B."/>
            <person name="Caspi A."/>
            <person name="Tesler G."/>
            <person name="Pevzner P.A."/>
            <person name="Haussler D."/>
            <person name="Roskin K.M."/>
            <person name="Baertsch R."/>
            <person name="Clawson H."/>
            <person name="Furey T.S."/>
            <person name="Hinrichs A.S."/>
            <person name="Karolchik D."/>
            <person name="Kent W.J."/>
            <person name="Rosenbloom K.R."/>
            <person name="Trumbower H."/>
            <person name="Weirauch M."/>
            <person name="Cooper D.N."/>
            <person name="Stenson P.D."/>
            <person name="Ma B."/>
            <person name="Brent M."/>
            <person name="Arumugam M."/>
            <person name="Shteynberg D."/>
            <person name="Copley R.R."/>
            <person name="Taylor M.S."/>
            <person name="Riethman H."/>
            <person name="Mudunuri U."/>
            <person name="Peterson J."/>
            <person name="Guyer M."/>
            <person name="Felsenfeld A."/>
            <person name="Old S."/>
            <person name="Mockrin S."/>
            <person name="Collins F.S."/>
        </authorList>
    </citation>
    <scope>NUCLEOTIDE SEQUENCE [LARGE SCALE GENOMIC DNA]</scope>
    <source>
        <strain>Brown Norway</strain>
    </source>
</reference>
<reference key="2">
    <citation type="journal article" date="2021" name="Autophagy">
        <title>A high-throughput screening identifies ZNF418 as a novel regulator of the ubiquitin-proteasome system and autophagy-lysosomal pathway.</title>
        <authorList>
            <person name="Singh S.R."/>
            <person name="Meyer-Jens M."/>
            <person name="Alizoti E."/>
            <person name="Bacon W.C."/>
            <person name="Davis G."/>
            <person name="Osinska H."/>
            <person name="Gulick J."/>
            <person name="Reischmann-Duesener S."/>
            <person name="Orthey E."/>
            <person name="McLendon P.M."/>
            <person name="Molkentin J.D."/>
            <person name="Schlossarek S."/>
            <person name="Robbins J."/>
            <person name="Carrier L."/>
        </authorList>
    </citation>
    <scope>FUNCTION</scope>
    <scope>SUBCELLULAR LOCATION</scope>
</reference>
<name>ZN418_RAT</name>
<comment type="function">
    <text evidence="1 5">Transcriptional repressor (By similarity). May play a role as regulator of the ubiquitin-proteasome system and autophagy-lysosomal pathway (PubMed:33249983).</text>
</comment>
<comment type="subcellular location">
    <subcellularLocation>
        <location evidence="5">Nucleus</location>
    </subcellularLocation>
</comment>
<comment type="similarity">
    <text evidence="6">Belongs to the krueppel C2H2-type zinc-finger protein family.</text>
</comment>
<keyword id="KW-0479">Metal-binding</keyword>
<keyword id="KW-0539">Nucleus</keyword>
<keyword id="KW-1185">Reference proteome</keyword>
<keyword id="KW-0677">Repeat</keyword>
<keyword id="KW-0862">Zinc</keyword>
<keyword id="KW-0863">Zinc-finger</keyword>
<gene>
    <name evidence="1" type="primary">ZNF418</name>
    <name evidence="7" type="synonym">Zfp418</name>
</gene>
<proteinExistence type="inferred from homology"/>
<evidence type="ECO:0000250" key="1">
    <source>
        <dbReference type="UniProtKB" id="Q8TF45"/>
    </source>
</evidence>
<evidence type="ECO:0000255" key="2">
    <source>
        <dbReference type="PROSITE-ProRule" id="PRU00042"/>
    </source>
</evidence>
<evidence type="ECO:0000255" key="3">
    <source>
        <dbReference type="PROSITE-ProRule" id="PRU00119"/>
    </source>
</evidence>
<evidence type="ECO:0000256" key="4">
    <source>
        <dbReference type="SAM" id="MobiDB-lite"/>
    </source>
</evidence>
<evidence type="ECO:0000269" key="5">
    <source>
    </source>
</evidence>
<evidence type="ECO:0000305" key="6"/>
<evidence type="ECO:0000312" key="7">
    <source>
        <dbReference type="RGD" id="1311663"/>
    </source>
</evidence>
<feature type="chain" id="PRO_0000458877" description="Zinc finger protein 418">
    <location>
        <begin position="1"/>
        <end position="683"/>
    </location>
</feature>
<feature type="domain" description="KRAB" evidence="3">
    <location>
        <begin position="48"/>
        <end position="123"/>
    </location>
</feature>
<feature type="zinc finger region" description="C2H2-type 1" evidence="2">
    <location>
        <begin position="287"/>
        <end position="309"/>
    </location>
</feature>
<feature type="zinc finger region" description="C2H2-type 2" evidence="2">
    <location>
        <begin position="315"/>
        <end position="337"/>
    </location>
</feature>
<feature type="zinc finger region" description="C2H2-type 3" evidence="2">
    <location>
        <begin position="343"/>
        <end position="365"/>
    </location>
</feature>
<feature type="zinc finger region" description="C2H2-type 4" evidence="2">
    <location>
        <begin position="371"/>
        <end position="393"/>
    </location>
</feature>
<feature type="zinc finger region" description="C2H2-type 5" evidence="2">
    <location>
        <begin position="399"/>
        <end position="421"/>
    </location>
</feature>
<feature type="zinc finger region" description="C2H2-type 6" evidence="2">
    <location>
        <begin position="427"/>
        <end position="449"/>
    </location>
</feature>
<feature type="zinc finger region" description="C2H2-type 7" evidence="2">
    <location>
        <begin position="455"/>
        <end position="477"/>
    </location>
</feature>
<feature type="zinc finger region" description="C2H2-type 8" evidence="2">
    <location>
        <begin position="483"/>
        <end position="505"/>
    </location>
</feature>
<feature type="zinc finger region" description="C2H2-type 9" evidence="2">
    <location>
        <begin position="511"/>
        <end position="533"/>
    </location>
</feature>
<feature type="zinc finger region" description="C2H2-type 10" evidence="2">
    <location>
        <begin position="539"/>
        <end position="561"/>
    </location>
</feature>
<feature type="zinc finger region" description="C2H2-type 11" evidence="2">
    <location>
        <begin position="567"/>
        <end position="589"/>
    </location>
</feature>
<feature type="zinc finger region" description="C2H2-type 12" evidence="2">
    <location>
        <begin position="595"/>
        <end position="617"/>
    </location>
</feature>
<feature type="zinc finger region" description="C2H2-type 13" evidence="2">
    <location>
        <begin position="623"/>
        <end position="645"/>
    </location>
</feature>
<feature type="zinc finger region" description="C2H2-type 14" evidence="2">
    <location>
        <begin position="651"/>
        <end position="673"/>
    </location>
</feature>
<feature type="region of interest" description="Disordered" evidence="4">
    <location>
        <begin position="102"/>
        <end position="124"/>
    </location>
</feature>
<feature type="region of interest" description="Disordered" evidence="4">
    <location>
        <begin position="209"/>
        <end position="247"/>
    </location>
</feature>
<feature type="compositionally biased region" description="Polar residues" evidence="4">
    <location>
        <begin position="102"/>
        <end position="120"/>
    </location>
</feature>
<feature type="compositionally biased region" description="Basic and acidic residues" evidence="4">
    <location>
        <begin position="225"/>
        <end position="239"/>
    </location>
</feature>
<accession>D3ZVT0</accession>